<proteinExistence type="evidence at protein level"/>
<feature type="chain" id="PRO_0000442929" description="Disks large homolog 1">
    <location>
        <begin position="1"/>
        <end position="967"/>
    </location>
</feature>
<feature type="domain" description="L27" evidence="6">
    <location>
        <begin position="5"/>
        <end position="65"/>
    </location>
</feature>
<feature type="domain" description="PDZ 1" evidence="4">
    <location>
        <begin position="202"/>
        <end position="289"/>
    </location>
</feature>
<feature type="domain" description="PDZ 2" evidence="4">
    <location>
        <begin position="361"/>
        <end position="448"/>
    </location>
</feature>
<feature type="domain" description="PDZ 3" evidence="4">
    <location>
        <begin position="510"/>
        <end position="591"/>
    </location>
</feature>
<feature type="domain" description="SH3" evidence="5">
    <location>
        <begin position="619"/>
        <end position="690"/>
    </location>
</feature>
<feature type="domain" description="Guanylate kinase-like" evidence="3">
    <location>
        <begin position="769"/>
        <end position="955"/>
    </location>
</feature>
<feature type="region of interest" description="Disordered" evidence="7">
    <location>
        <begin position="324"/>
        <end position="351"/>
    </location>
</feature>
<feature type="region of interest" description="Disordered" evidence="7">
    <location>
        <begin position="673"/>
        <end position="723"/>
    </location>
</feature>
<feature type="compositionally biased region" description="Pro residues" evidence="7">
    <location>
        <begin position="330"/>
        <end position="339"/>
    </location>
</feature>
<feature type="compositionally biased region" description="Basic residues" evidence="7">
    <location>
        <begin position="682"/>
        <end position="696"/>
    </location>
</feature>
<feature type="compositionally biased region" description="Polar residues" evidence="7">
    <location>
        <begin position="697"/>
        <end position="715"/>
    </location>
</feature>
<dbReference type="EMBL" id="AJ295228">
    <property type="protein sequence ID" value="CAC35153.1"/>
    <property type="molecule type" value="mRNA"/>
</dbReference>
<dbReference type="EMBL" id="AF406786">
    <property type="protein sequence ID" value="AAL01376.1"/>
    <property type="molecule type" value="mRNA"/>
</dbReference>
<dbReference type="EMBL" id="BX284606">
    <property type="protein sequence ID" value="CCD65680.1"/>
    <property type="molecule type" value="Genomic_DNA"/>
</dbReference>
<dbReference type="EMBL" id="BX284606">
    <property type="protein sequence ID" value="CCD65681.1"/>
    <property type="molecule type" value="Genomic_DNA"/>
</dbReference>
<dbReference type="RefSeq" id="NP_001024432.1">
    <property type="nucleotide sequence ID" value="NM_001029261.3"/>
</dbReference>
<dbReference type="SMR" id="G5ECY0"/>
<dbReference type="FunCoup" id="G5ECY0">
    <property type="interactions" value="2102"/>
</dbReference>
<dbReference type="IntAct" id="G5ECY0">
    <property type="interactions" value="41"/>
</dbReference>
<dbReference type="STRING" id="6239.C25F6.2a.1"/>
<dbReference type="PaxDb" id="6239-C25F6.2a"/>
<dbReference type="PeptideAtlas" id="G5ECY0"/>
<dbReference type="ABCD" id="G5ECY0">
    <property type="antibodies" value="1 sequenced antibody"/>
</dbReference>
<dbReference type="GeneID" id="180819"/>
<dbReference type="KEGG" id="cel:CELE_C25F6.2"/>
<dbReference type="AGR" id="WB:WBGene00001006"/>
<dbReference type="CTD" id="180819"/>
<dbReference type="WormBase" id="C25F6.2">
    <property type="protein sequence ID" value="CE36524"/>
    <property type="gene ID" value="WBGene00001006"/>
    <property type="gene designation" value="dlg-1"/>
</dbReference>
<dbReference type="eggNOG" id="KOG0708">
    <property type="taxonomic scope" value="Eukaryota"/>
</dbReference>
<dbReference type="GeneTree" id="ENSGT00940000167723"/>
<dbReference type="HOGENOM" id="CLU_001715_4_2_1"/>
<dbReference type="InParanoid" id="G5ECY0"/>
<dbReference type="OMA" id="YGQFEAK"/>
<dbReference type="OrthoDB" id="78824at2759"/>
<dbReference type="PhylomeDB" id="G5ECY0"/>
<dbReference type="Reactome" id="R-CEL-438066">
    <property type="pathway name" value="Unblocking of NMDA receptors, glutamate binding and activation"/>
</dbReference>
<dbReference type="Reactome" id="R-CEL-451308">
    <property type="pathway name" value="Activation of Ca-permeable Kainate Receptor"/>
</dbReference>
<dbReference type="Reactome" id="R-CEL-6794361">
    <property type="pathway name" value="Neurexins and neuroligins"/>
</dbReference>
<dbReference type="Reactome" id="R-CEL-8849932">
    <property type="pathway name" value="Synaptic adhesion-like molecules"/>
</dbReference>
<dbReference type="SignaLink" id="G5ECY0"/>
<dbReference type="PRO" id="PR:G5ECY0"/>
<dbReference type="Proteomes" id="UP000001940">
    <property type="component" value="Chromosome X"/>
</dbReference>
<dbReference type="Bgee" id="WBGene00001006">
    <property type="expression patterns" value="Expressed in pharyngeal muscle cell (C elegans) and 10 other cell types or tissues"/>
</dbReference>
<dbReference type="GO" id="GO:0005912">
    <property type="term" value="C:adherens junction"/>
    <property type="evidence" value="ECO:0000314"/>
    <property type="project" value="WormBase"/>
</dbReference>
<dbReference type="GO" id="GO:0043296">
    <property type="term" value="C:apical junction complex"/>
    <property type="evidence" value="ECO:0000314"/>
    <property type="project" value="WormBase"/>
</dbReference>
<dbReference type="GO" id="GO:0016324">
    <property type="term" value="C:apical plasma membrane"/>
    <property type="evidence" value="ECO:0007669"/>
    <property type="project" value="UniProtKB-SubCell"/>
</dbReference>
<dbReference type="GO" id="GO:0016323">
    <property type="term" value="C:basolateral plasma membrane"/>
    <property type="evidence" value="ECO:0000318"/>
    <property type="project" value="GO_Central"/>
</dbReference>
<dbReference type="GO" id="GO:0005737">
    <property type="term" value="C:cytoplasm"/>
    <property type="evidence" value="ECO:0007669"/>
    <property type="project" value="UniProtKB-SubCell"/>
</dbReference>
<dbReference type="GO" id="GO:0016328">
    <property type="term" value="C:lateral plasma membrane"/>
    <property type="evidence" value="ECO:0007669"/>
    <property type="project" value="UniProtKB-SubCell"/>
</dbReference>
<dbReference type="GO" id="GO:0031594">
    <property type="term" value="C:neuromuscular junction"/>
    <property type="evidence" value="ECO:0000318"/>
    <property type="project" value="GO_Central"/>
</dbReference>
<dbReference type="GO" id="GO:0043005">
    <property type="term" value="C:neuron projection"/>
    <property type="evidence" value="ECO:0000318"/>
    <property type="project" value="GO_Central"/>
</dbReference>
<dbReference type="GO" id="GO:0098839">
    <property type="term" value="C:postsynaptic density membrane"/>
    <property type="evidence" value="ECO:0000318"/>
    <property type="project" value="GO_Central"/>
</dbReference>
<dbReference type="GO" id="GO:0004385">
    <property type="term" value="F:guanylate kinase activity"/>
    <property type="evidence" value="ECO:0000250"/>
    <property type="project" value="WormBase"/>
</dbReference>
<dbReference type="GO" id="GO:0019901">
    <property type="term" value="F:protein kinase binding"/>
    <property type="evidence" value="ECO:0000318"/>
    <property type="project" value="GO_Central"/>
</dbReference>
<dbReference type="GO" id="GO:0098609">
    <property type="term" value="P:cell-cell adhesion"/>
    <property type="evidence" value="ECO:0000318"/>
    <property type="project" value="GO_Central"/>
</dbReference>
<dbReference type="GO" id="GO:0007268">
    <property type="term" value="P:chemical synaptic transmission"/>
    <property type="evidence" value="ECO:0000318"/>
    <property type="project" value="GO_Central"/>
</dbReference>
<dbReference type="GO" id="GO:0009792">
    <property type="term" value="P:embryo development ending in birth or egg hatching"/>
    <property type="evidence" value="ECO:0000315"/>
    <property type="project" value="WormBase"/>
</dbReference>
<dbReference type="GO" id="GO:0045197">
    <property type="term" value="P:establishment or maintenance of epithelial cell apical/basal polarity"/>
    <property type="evidence" value="ECO:0000318"/>
    <property type="project" value="GO_Central"/>
</dbReference>
<dbReference type="GO" id="GO:0007399">
    <property type="term" value="P:nervous system development"/>
    <property type="evidence" value="ECO:0000318"/>
    <property type="project" value="GO_Central"/>
</dbReference>
<dbReference type="GO" id="GO:0035418">
    <property type="term" value="P:protein localization to synapse"/>
    <property type="evidence" value="ECO:0000318"/>
    <property type="project" value="GO_Central"/>
</dbReference>
<dbReference type="GO" id="GO:0043113">
    <property type="term" value="P:receptor clustering"/>
    <property type="evidence" value="ECO:0000318"/>
    <property type="project" value="GO_Central"/>
</dbReference>
<dbReference type="GO" id="GO:0097120">
    <property type="term" value="P:receptor localization to synapse"/>
    <property type="evidence" value="ECO:0000318"/>
    <property type="project" value="GO_Central"/>
</dbReference>
<dbReference type="GO" id="GO:0099072">
    <property type="term" value="P:regulation of postsynaptic membrane neurotransmitter receptor levels"/>
    <property type="evidence" value="ECO:0000318"/>
    <property type="project" value="GO_Central"/>
</dbReference>
<dbReference type="GO" id="GO:0045186">
    <property type="term" value="P:zonula adherens assembly"/>
    <property type="evidence" value="ECO:0000315"/>
    <property type="project" value="WormBase"/>
</dbReference>
<dbReference type="CDD" id="cd00071">
    <property type="entry name" value="GMPK"/>
    <property type="match status" value="1"/>
</dbReference>
<dbReference type="CDD" id="cd06723">
    <property type="entry name" value="PDZ1_Dlg1-2-4-like"/>
    <property type="match status" value="1"/>
</dbReference>
<dbReference type="CDD" id="cd06724">
    <property type="entry name" value="PDZ2_Dlg1-2-4-like"/>
    <property type="match status" value="1"/>
</dbReference>
<dbReference type="CDD" id="cd06795">
    <property type="entry name" value="PDZ3_Dlg1-2-4-like"/>
    <property type="match status" value="1"/>
</dbReference>
<dbReference type="CDD" id="cd11861">
    <property type="entry name" value="SH3_DLG-like"/>
    <property type="match status" value="1"/>
</dbReference>
<dbReference type="FunFam" id="2.30.30.40:FF:000337">
    <property type="entry name" value="Disks large homolog 1"/>
    <property type="match status" value="1"/>
</dbReference>
<dbReference type="FunFam" id="2.30.42.10:FF:000001">
    <property type="entry name" value="Disks large homolog 1 isoform 2"/>
    <property type="match status" value="1"/>
</dbReference>
<dbReference type="FunFam" id="2.30.42.10:FF:000048">
    <property type="entry name" value="disks large homolog 1 isoform X1"/>
    <property type="match status" value="1"/>
</dbReference>
<dbReference type="FunFam" id="3.30.63.10:FF:000002">
    <property type="entry name" value="Guanylate kinase 1"/>
    <property type="match status" value="1"/>
</dbReference>
<dbReference type="Gene3D" id="2.30.42.10">
    <property type="match status" value="3"/>
</dbReference>
<dbReference type="Gene3D" id="3.30.63.10">
    <property type="entry name" value="Guanylate Kinase phosphate binding domain"/>
    <property type="match status" value="1"/>
</dbReference>
<dbReference type="Gene3D" id="1.10.287.470">
    <property type="entry name" value="Helix hairpin bin"/>
    <property type="match status" value="1"/>
</dbReference>
<dbReference type="Gene3D" id="3.40.50.300">
    <property type="entry name" value="P-loop containing nucleotide triphosphate hydrolases"/>
    <property type="match status" value="1"/>
</dbReference>
<dbReference type="Gene3D" id="2.30.30.40">
    <property type="entry name" value="SH3 Domains"/>
    <property type="match status" value="2"/>
</dbReference>
<dbReference type="InterPro" id="IPR008145">
    <property type="entry name" value="GK/Ca_channel_bsu"/>
</dbReference>
<dbReference type="InterPro" id="IPR008144">
    <property type="entry name" value="Guanylate_kin-like_dom"/>
</dbReference>
<dbReference type="InterPro" id="IPR020590">
    <property type="entry name" value="Guanylate_kinase_CS"/>
</dbReference>
<dbReference type="InterPro" id="IPR015143">
    <property type="entry name" value="L27_1"/>
</dbReference>
<dbReference type="InterPro" id="IPR004172">
    <property type="entry name" value="L27_dom"/>
</dbReference>
<dbReference type="InterPro" id="IPR036892">
    <property type="entry name" value="L27_dom_sf"/>
</dbReference>
<dbReference type="InterPro" id="IPR027417">
    <property type="entry name" value="P-loop_NTPase"/>
</dbReference>
<dbReference type="InterPro" id="IPR001478">
    <property type="entry name" value="PDZ"/>
</dbReference>
<dbReference type="InterPro" id="IPR036034">
    <property type="entry name" value="PDZ_sf"/>
</dbReference>
<dbReference type="InterPro" id="IPR036028">
    <property type="entry name" value="SH3-like_dom_sf"/>
</dbReference>
<dbReference type="InterPro" id="IPR001452">
    <property type="entry name" value="SH3_domain"/>
</dbReference>
<dbReference type="InterPro" id="IPR050614">
    <property type="entry name" value="Synaptic_Scaffolding_LAP-MAGUK"/>
</dbReference>
<dbReference type="PANTHER" id="PTHR23119">
    <property type="entry name" value="DISCS LARGE"/>
    <property type="match status" value="1"/>
</dbReference>
<dbReference type="PANTHER" id="PTHR23119:SF51">
    <property type="entry name" value="DISKS LARGE 1 TUMOR SUPPRESSOR PROTEIN"/>
    <property type="match status" value="1"/>
</dbReference>
<dbReference type="Pfam" id="PF00625">
    <property type="entry name" value="Guanylate_kin"/>
    <property type="match status" value="1"/>
</dbReference>
<dbReference type="Pfam" id="PF09058">
    <property type="entry name" value="L27_1"/>
    <property type="match status" value="1"/>
</dbReference>
<dbReference type="Pfam" id="PF00595">
    <property type="entry name" value="PDZ"/>
    <property type="match status" value="3"/>
</dbReference>
<dbReference type="Pfam" id="PF00018">
    <property type="entry name" value="SH3_1"/>
    <property type="match status" value="1"/>
</dbReference>
<dbReference type="SMART" id="SM00072">
    <property type="entry name" value="GuKc"/>
    <property type="match status" value="1"/>
</dbReference>
<dbReference type="SMART" id="SM00569">
    <property type="entry name" value="L27"/>
    <property type="match status" value="1"/>
</dbReference>
<dbReference type="SMART" id="SM00228">
    <property type="entry name" value="PDZ"/>
    <property type="match status" value="3"/>
</dbReference>
<dbReference type="SMART" id="SM00326">
    <property type="entry name" value="SH3"/>
    <property type="match status" value="1"/>
</dbReference>
<dbReference type="SUPFAM" id="SSF101288">
    <property type="entry name" value="L27 domain"/>
    <property type="match status" value="1"/>
</dbReference>
<dbReference type="SUPFAM" id="SSF52540">
    <property type="entry name" value="P-loop containing nucleoside triphosphate hydrolases"/>
    <property type="match status" value="1"/>
</dbReference>
<dbReference type="SUPFAM" id="SSF50156">
    <property type="entry name" value="PDZ domain-like"/>
    <property type="match status" value="3"/>
</dbReference>
<dbReference type="SUPFAM" id="SSF50044">
    <property type="entry name" value="SH3-domain"/>
    <property type="match status" value="1"/>
</dbReference>
<dbReference type="PROSITE" id="PS00856">
    <property type="entry name" value="GUANYLATE_KINASE_1"/>
    <property type="match status" value="1"/>
</dbReference>
<dbReference type="PROSITE" id="PS50052">
    <property type="entry name" value="GUANYLATE_KINASE_2"/>
    <property type="match status" value="1"/>
</dbReference>
<dbReference type="PROSITE" id="PS51022">
    <property type="entry name" value="L27"/>
    <property type="match status" value="1"/>
</dbReference>
<dbReference type="PROSITE" id="PS50106">
    <property type="entry name" value="PDZ"/>
    <property type="match status" value="3"/>
</dbReference>
<dbReference type="PROSITE" id="PS50002">
    <property type="entry name" value="SH3"/>
    <property type="match status" value="1"/>
</dbReference>
<gene>
    <name evidence="16" type="primary">dlg-1</name>
    <name evidence="16" type="ORF">C25F6.2</name>
    <name type="ORF">CELE_C25F6.2</name>
</gene>
<name>DLG1_CAEEL</name>
<protein>
    <recommendedName>
        <fullName evidence="13">Disks large homolog 1</fullName>
    </recommendedName>
    <alternativeName>
        <fullName>MAGUK protein DLG-1</fullName>
    </alternativeName>
    <alternativeName>
        <fullName>SAP97-like protein DLG-1</fullName>
    </alternativeName>
</protein>
<evidence type="ECO:0000250" key="1">
    <source>
        <dbReference type="UniProtKB" id="Q12959"/>
    </source>
</evidence>
<evidence type="ECO:0000255" key="2"/>
<evidence type="ECO:0000255" key="3">
    <source>
        <dbReference type="PROSITE-ProRule" id="PRU00100"/>
    </source>
</evidence>
<evidence type="ECO:0000255" key="4">
    <source>
        <dbReference type="PROSITE-ProRule" id="PRU00143"/>
    </source>
</evidence>
<evidence type="ECO:0000255" key="5">
    <source>
        <dbReference type="PROSITE-ProRule" id="PRU00192"/>
    </source>
</evidence>
<evidence type="ECO:0000255" key="6">
    <source>
        <dbReference type="PROSITE-ProRule" id="PRU00365"/>
    </source>
</evidence>
<evidence type="ECO:0000256" key="7">
    <source>
        <dbReference type="SAM" id="MobiDB-lite"/>
    </source>
</evidence>
<evidence type="ECO:0000269" key="8">
    <source>
    </source>
</evidence>
<evidence type="ECO:0000269" key="9">
    <source>
    </source>
</evidence>
<evidence type="ECO:0000269" key="10">
    <source>
    </source>
</evidence>
<evidence type="ECO:0000269" key="11">
    <source>
    </source>
</evidence>
<evidence type="ECO:0000269" key="12">
    <source>
    </source>
</evidence>
<evidence type="ECO:0000305" key="13"/>
<evidence type="ECO:0000305" key="14">
    <source>
    </source>
</evidence>
<evidence type="ECO:0000305" key="15">
    <source>
    </source>
</evidence>
<evidence type="ECO:0000312" key="16">
    <source>
        <dbReference type="WormBase" id="C25F6.2"/>
    </source>
</evidence>
<accession>G5ECY0</accession>
<accession>Q7Z124</accession>
<organism>
    <name type="scientific">Caenorhabditis elegans</name>
    <dbReference type="NCBI Taxonomy" id="6239"/>
    <lineage>
        <taxon>Eukaryota</taxon>
        <taxon>Metazoa</taxon>
        <taxon>Ecdysozoa</taxon>
        <taxon>Nematoda</taxon>
        <taxon>Chromadorea</taxon>
        <taxon>Rhabditida</taxon>
        <taxon>Rhabditina</taxon>
        <taxon>Rhabditomorpha</taxon>
        <taxon>Rhabditoidea</taxon>
        <taxon>Rhabditidae</taxon>
        <taxon>Peloderinae</taxon>
        <taxon>Caenorhabditis</taxon>
    </lineage>
</organism>
<sequence length="967" mass="106992">MSHESSEKAHKAIENVEDYCQTLTRHGNEELRTNLERVITTFKSNLMHSLLDIHDLYEQTLLSERKSDAEKNMEVRRVIERLEGGPHSYNSRPAATTSTSNYNLSSTTPLISDLRDRGGFSYLNGGGLGNGLGNGLGNGLLSSPYNSSSTHYLHERQRQTSHDGTWRETTTRTVDTPSGLERRVVEHTGVIDDHGRKWELENIVLEKGHTGLGFSITGGMDQPTEDGDTSIYVTNIIEGGAALADGRMRKNDIITAVNNTNCENVKHEVAVNALKSSGNVVSLSLKRRKDEAFLPIGGNFGGSTSYLRSGVTPSVSAGNLQHAIHSPSAPIHPPPPPPVHHGSLSQLSVGQYRSTRPNTSVIDLVKGARGLGFSIAGGQGNEHVKGDTDIYVTKIIEEGAAELDGRLRVGDKILEVDHHSLINTTHENAVNVLKNTGNRVRLLIQQGTGAIFNDSASQQFMPTTPILRPSSVQDYNRSQMGSQSHLSYGGPLNTSYSSQAPIAIPLEPRPVQLVKGQNGLGFNIVGGEDNEPIYISFVLPGGVADLSGNVKTGDVLLEVNGVVLRNATHKEAAEALRNAGNPVYLTLQYRPQEYQIFESKIEKLRNDVIAQSRMGTLSRKSEYVRALFDYDPSRENSVAPHRSMGFNYGDILHIINSSDDEWWTARKVHENGEETAEGVIPSKKRVEKRERLRRKQVNFNSGSQSLGRNSSTTGLENRRGSRSQLSFSRKFPFVKSTDRLNDLNEESSNVAEEPVWSYQAVEQQAINYVRPVIILGALKDRINDELVNRDPSKFSSCVPHTSRPPREGEVNGRDYYFVNKHNMEEDVKNNLFIEAGQFQNNLYGTSIQSVRDVANQGRHCILDVSGNAIRRLQSNANIQPISIFIKPSSAQQILELDSQLATNRQDDRAMSGEEAQAQYSRCHRIEQTFGDLFTQEISNVHSANDVLSKVYSIISRESQTPIWVPRH</sequence>
<comment type="function">
    <text evidence="1 8 9 10 11 12 14 15">Essential multidomain scaffolding protein required for normal development (Probable). Recruits channels, receptors and signaling molecules to discrete plasma membrane domains in polarized cells (By similarity). Required for proper embryonic elongation. Acts upstream of ajm-1 and becomes localized to apical junctions independently of ajm-1. With let-413, cooperatively regulates ajm-1 localization to apical junctions and the establishment of newly formed epithelia (PubMed:11715019, PubMed:18411252, PubMed:19109941). Plays a role in assembling the adherens junction by clustering ajm-1 and other proteins, to form electron-dense structures; may form a compartment distinct to that of hmp-1 and associated proteins (PubMed:11493666). Plays a role in the directed outgrowth of seam cells, towards neighboring seam cells, during larval development (PubMed:34673778).</text>
</comment>
<comment type="subunit">
    <text evidence="9 10">Homooligomerizes; requires L27 domain (PubMed:18411252). Interacts (via L27 domain) with ajm-1; the interaction regulates ajm-1 apical junction location (PubMed:11715019, PubMed:18411252).</text>
</comment>
<comment type="interaction">
    <interactant intactId="EBI-312458">
        <id>G5ECY0</id>
    </interactant>
    <interactant intactId="EBI-11468703">
        <id>Q95ZY7</id>
        <label>ajm-1</label>
    </interactant>
    <organismsDiffer>false</organismsDiffer>
    <experiments>3</experiments>
</comment>
<comment type="interaction">
    <interactant intactId="EBI-312458">
        <id>G5ECY0</id>
    </interactant>
    <interactant intactId="EBI-2413872">
        <id>H2L055</id>
        <label>CELE_F53A10.2</label>
    </interactant>
    <organismsDiffer>false</organismsDiffer>
    <experiments>2</experiments>
</comment>
<comment type="interaction">
    <interactant intactId="EBI-312458">
        <id>G5ECY0</id>
    </interactant>
    <interactant intactId="EBI-316187">
        <id>Q18426</id>
        <label>prx-5</label>
    </interactant>
    <organismsDiffer>false</organismsDiffer>
    <experiments>4</experiments>
</comment>
<comment type="interaction">
    <interactant intactId="EBI-312458">
        <id>G5ECY0</id>
    </interactant>
    <interactant intactId="EBI-320612">
        <id>G5ECG0</id>
        <label>tac-1</label>
    </interactant>
    <organismsDiffer>false</organismsDiffer>
    <experiments>3</experiments>
</comment>
<comment type="subcellular location">
    <subcellularLocation>
        <location evidence="9 10">Membrane</location>
        <topology evidence="1">Peripheral membrane protein</topology>
    </subcellularLocation>
    <subcellularLocation>
        <location evidence="8 9">Apical cell membrane</location>
    </subcellularLocation>
    <subcellularLocation>
        <location evidence="9 10 11">Cell junction</location>
        <location evidence="9 10 11">Adherens junction</location>
    </subcellularLocation>
    <subcellularLocation>
        <location evidence="10">Lateral cell membrane</location>
    </subcellularLocation>
    <subcellularLocation>
        <location evidence="1">Cytoplasm</location>
    </subcellularLocation>
    <text evidence="8 9 10">Localizes at the apical junctions (PubMed:11715019, PubMed:18411252). Localizes to the subapical membrane of epithelial cells (PubMed:11493666). Localization at adherens junctions requires PDZ domains, lateral distribution requires SH3 domain and is let-413 dependent (PubMed:18411252).</text>
</comment>
<comment type="tissue specificity">
    <text evidence="8 9 11">Expressed in the apical junctions in the hypodermis. Expressed in epithelial cells in the reproductive system including vulva, uterus and spermatheca (PubMed:11493666, PubMed:19109941).</text>
</comment>
<comment type="developmental stage">
    <text evidence="8 11">Detected in the epidermis, pharynx and intestine after ventral closure (PubMed:11493666). Forms a continuous belt around epithelial cells at a subapical position throughout embryonic, larval and adult development (PubMed:11493666, PubMed:19109941).</text>
</comment>
<comment type="domain">
    <text evidence="10">PDZ domains are required for localization at the adherens junctions. SH3 domain is necessary for let-413 dependent lateral distribution. L27 domain is responsible for homooligomerization and interaction with ajm-1.</text>
</comment>
<comment type="disruption phenotype">
    <text evidence="8 9 10 11">Mutant embryos have elongation arrested immediately before or at the 2-fold stage. They display a large vacuole in the posterior region. RNAi-mediated knockdown exhibits epithelial defects including vacuoles in epithelial tissues, cytoplasmic leakage from tail tip and the ventral surface, and abnormal adherens junctions with discontinuous and disorganized ajm-1 belt-like pattern (PubMed:11493666). Widens the intestinal lumen but has no effect on the apicobasal polarity of the epithelial tissue in embryos (PubMed:11493666). Reduces electron-dense subapical structures in the intestinal and epithelial tissues (PubMed:11493666). Causes mislocalization of hmp-1 and ajm-1 from the top of the lateral membrane, infrequently to the bottom for hmp-1, and often to the middle and sometimes to the bottom, in the case of ajm-1 (PubMed:11493666). Reduces laid eggs and causes 67% sterility due to somatic gonad defects (PubMed:19109941). Exhibits endomitotic oocytes (Emo) phenotype, where developing oocytes are arrested during mitotic anaphase, causing them to accumulate in the proximal ovary (PubMed:19109941). Does not interfere with let-413 localization but causes ajm-1 to be more disordered in distal, than in proximal, spermatheca cells (PubMed:19109941). Forms large, irregular and misaligned bundles of F-actin around the spermatheca due to the rupturing of junctional belt-like pattern and disorganization of the apical junction (PubMed:19109941). Exhibits ovulation defect due to dysfunction of spermatheca epithelia resulting in delay between nuclear envelope breakdown and the entry of oocytes into the spermatheca (PubMed:19109941). Does not form ajm-1 continuous belt during the comma stage of embryonic development (PubMed:19109941).</text>
</comment>
<comment type="similarity">
    <text evidence="2">Belongs to the MAGUK family.</text>
</comment>
<keyword id="KW-0965">Cell junction</keyword>
<keyword id="KW-1003">Cell membrane</keyword>
<keyword id="KW-0963">Cytoplasm</keyword>
<keyword id="KW-0472">Membrane</keyword>
<keyword id="KW-1185">Reference proteome</keyword>
<keyword id="KW-0677">Repeat</keyword>
<keyword id="KW-0728">SH3 domain</keyword>
<reference evidence="13" key="1">
    <citation type="journal article" date="2001" name="J. Cell Sci.">
        <title>Assembly of C. elegans apical junctions involves positioning and compaction by LET-413 and protein aggregation by the MAGUK protein DLG-1.</title>
        <authorList>
            <person name="McMahon L."/>
            <person name="Legouis R."/>
            <person name="Vonesch J.L."/>
            <person name="Labouesse M."/>
        </authorList>
    </citation>
    <scope>NUCLEOTIDE SEQUENCE [MRNA]</scope>
    <scope>FUNCTION</scope>
    <scope>SUBCELLULAR LOCATION</scope>
    <scope>TISSUE SPECIFICITY</scope>
    <scope>DEVELOPMENTAL STAGE</scope>
    <scope>DISRUPTION PHENOTYPE</scope>
</reference>
<reference key="2">
    <citation type="journal article" date="2001" name="Mol. Biol. Cell">
        <title>DLG-1 is a MAGUK similar to SAP97 and is required for adherens junction formation.</title>
        <authorList>
            <person name="Firestein B.L."/>
            <person name="Rongo C."/>
        </authorList>
    </citation>
    <scope>NUCLEOTIDE SEQUENCE [MRNA]</scope>
</reference>
<reference key="3">
    <citation type="journal article" date="1998" name="Science">
        <title>Genome sequence of the nematode C. elegans: a platform for investigating biology.</title>
        <authorList>
            <consortium name="The C. elegans sequencing consortium"/>
        </authorList>
    </citation>
    <scope>NUCLEOTIDE SEQUENCE [LARGE SCALE GENOMIC DNA]</scope>
    <source>
        <strain>Bristol N2</strain>
    </source>
</reference>
<reference key="4">
    <citation type="journal article" date="2001" name="Nat. Cell Biol.">
        <title>Cooperative regulation of AJM-1 controls junctional integrity in Caenorhabditis elegans epithelia.</title>
        <authorList>
            <person name="Koeppen M."/>
            <person name="Simske J.S."/>
            <person name="Sims P.A."/>
            <person name="Firestein B.L."/>
            <person name="Hall D.H."/>
            <person name="Radice A.D."/>
            <person name="Rongo C."/>
            <person name="Hardin J.D."/>
        </authorList>
    </citation>
    <scope>FUNCTION</scope>
    <scope>SUBCELLULAR LOCATION</scope>
    <scope>TISSUE SPECIFICITY</scope>
    <scope>INTERACTION WITH AJM-1</scope>
    <scope>DISRUPTION PHENOTYPE</scope>
</reference>
<reference key="5">
    <citation type="journal article" date="2008" name="J. Cell Sci.">
        <title>Dynamic analysis identifies novel roles for DLG-1 subdomains in AJM-1 recruitment and LET-413-dependent apical focusing.</title>
        <authorList>
            <person name="Lockwood C.A."/>
            <person name="Lynch A.M."/>
            <person name="Hardin J."/>
        </authorList>
    </citation>
    <scope>FUNCTION</scope>
    <scope>SUBUNIT</scope>
    <scope>INTERACTION WITH AJM-1</scope>
    <scope>DISRUPTION PHENOTYPE</scope>
    <scope>SUBCELLULAR LOCATION</scope>
    <scope>DOMAIN</scope>
</reference>
<reference evidence="13" key="6">
    <citation type="journal article" date="2009" name="Dev. Biol.">
        <title>Increased IP3/Ca2+ signaling compensates depletion of LET-413/DLG-1 in C. elegans epithelial junction assembly.</title>
        <authorList>
            <person name="Pilipiuk J."/>
            <person name="Lefebvre C."/>
            <person name="Wiesenfahrt T."/>
            <person name="Legouis R."/>
            <person name="Bossinger O."/>
        </authorList>
    </citation>
    <scope>FUNCTION</scope>
    <scope>SUBCELLULAR LOCATION</scope>
    <scope>TISSUE SPECIFICITY</scope>
    <scope>DEVELOPMENTAL STAGE</scope>
    <scope>DISRUPTION PHENOTYPE</scope>
</reference>
<reference evidence="13" key="7">
    <citation type="journal article" date="2021" name="PLoS Genet.">
        <title>Caenorhabditis elegans LET-413 Scribble is essential in the epidermis for growth, viability, and directional outgrowth of epithelial seam cells.</title>
        <authorList>
            <person name="Riga A."/>
            <person name="Cravo J."/>
            <person name="Schmidt R."/>
            <person name="Pires H.R."/>
            <person name="Castiglioni V.G."/>
            <person name="van den Heuvel S."/>
            <person name="Boxem M."/>
        </authorList>
    </citation>
    <scope>FUNCTION</scope>
</reference>